<proteinExistence type="inferred from homology"/>
<sequence>MKVSEFDYELPSELIAQEPVEPRDASRLMVLHRKTQRIEHRIFREIIEYLEPGDLLVLNVSKVIPARLYARKKTGASIEILLIERLEEGIWKCLVRPGQKVKKGTELVIDEDLSAVCLGRGEDGTRILKFQPQDDRLIFEKGRTPLPPYIKNEVPLERYQTVYAKEEGSVAAPTAGLHFTPELIEKLKKKGVQFAEVVLHVGIGTFRPVKVEEVEKHKMHEEFYQVTKETIKKLRETRERGNRIVAVGTTTVRTLETIARLPEQEEYVGKTDLFIYPPFEFKLVDALITNFHLPRSTLLMLVAAFAGKDFVMEAYREAVKRRYRFFSFGDAMLIL</sequence>
<gene>
    <name evidence="1" type="primary">queA</name>
    <name type="ordered locus">Tpet_0344</name>
</gene>
<feature type="chain" id="PRO_1000015304" description="S-adenosylmethionine:tRNA ribosyltransferase-isomerase">
    <location>
        <begin position="1"/>
        <end position="335"/>
    </location>
</feature>
<accession>A5IJK0</accession>
<keyword id="KW-0963">Cytoplasm</keyword>
<keyword id="KW-0671">Queuosine biosynthesis</keyword>
<keyword id="KW-0949">S-adenosyl-L-methionine</keyword>
<keyword id="KW-0808">Transferase</keyword>
<comment type="function">
    <text evidence="1">Transfers and isomerizes the ribose moiety from AdoMet to the 7-aminomethyl group of 7-deazaguanine (preQ1-tRNA) to give epoxyqueuosine (oQ-tRNA).</text>
</comment>
<comment type="catalytic activity">
    <reaction evidence="1">
        <text>7-aminomethyl-7-carbaguanosine(34) in tRNA + S-adenosyl-L-methionine = epoxyqueuosine(34) in tRNA + adenine + L-methionine + 2 H(+)</text>
        <dbReference type="Rhea" id="RHEA:32155"/>
        <dbReference type="Rhea" id="RHEA-COMP:10342"/>
        <dbReference type="Rhea" id="RHEA-COMP:18582"/>
        <dbReference type="ChEBI" id="CHEBI:15378"/>
        <dbReference type="ChEBI" id="CHEBI:16708"/>
        <dbReference type="ChEBI" id="CHEBI:57844"/>
        <dbReference type="ChEBI" id="CHEBI:59789"/>
        <dbReference type="ChEBI" id="CHEBI:82833"/>
        <dbReference type="ChEBI" id="CHEBI:194443"/>
        <dbReference type="EC" id="2.4.99.17"/>
    </reaction>
</comment>
<comment type="pathway">
    <text evidence="1">tRNA modification; tRNA-queuosine biosynthesis.</text>
</comment>
<comment type="subunit">
    <text evidence="1">Monomer.</text>
</comment>
<comment type="subcellular location">
    <subcellularLocation>
        <location evidence="1">Cytoplasm</location>
    </subcellularLocation>
</comment>
<comment type="similarity">
    <text evidence="1">Belongs to the QueA family.</text>
</comment>
<evidence type="ECO:0000255" key="1">
    <source>
        <dbReference type="HAMAP-Rule" id="MF_00113"/>
    </source>
</evidence>
<name>QUEA_THEP1</name>
<protein>
    <recommendedName>
        <fullName evidence="1">S-adenosylmethionine:tRNA ribosyltransferase-isomerase</fullName>
        <ecNumber evidence="1">2.4.99.17</ecNumber>
    </recommendedName>
    <alternativeName>
        <fullName evidence="1">Queuosine biosynthesis protein QueA</fullName>
    </alternativeName>
</protein>
<organism>
    <name type="scientific">Thermotoga petrophila (strain ATCC BAA-488 / DSM 13995 / JCM 10881 / RKU-1)</name>
    <dbReference type="NCBI Taxonomy" id="390874"/>
    <lineage>
        <taxon>Bacteria</taxon>
        <taxon>Thermotogati</taxon>
        <taxon>Thermotogota</taxon>
        <taxon>Thermotogae</taxon>
        <taxon>Thermotogales</taxon>
        <taxon>Thermotogaceae</taxon>
        <taxon>Thermotoga</taxon>
    </lineage>
</organism>
<reference key="1">
    <citation type="submission" date="2007-05" db="EMBL/GenBank/DDBJ databases">
        <title>Complete sequence of Thermotoga petrophila RKU-1.</title>
        <authorList>
            <consortium name="US DOE Joint Genome Institute"/>
            <person name="Copeland A."/>
            <person name="Lucas S."/>
            <person name="Lapidus A."/>
            <person name="Barry K."/>
            <person name="Glavina del Rio T."/>
            <person name="Dalin E."/>
            <person name="Tice H."/>
            <person name="Pitluck S."/>
            <person name="Sims D."/>
            <person name="Brettin T."/>
            <person name="Bruce D."/>
            <person name="Detter J.C."/>
            <person name="Han C."/>
            <person name="Tapia R."/>
            <person name="Schmutz J."/>
            <person name="Larimer F."/>
            <person name="Land M."/>
            <person name="Hauser L."/>
            <person name="Kyrpides N."/>
            <person name="Mikhailova N."/>
            <person name="Nelson K."/>
            <person name="Gogarten J.P."/>
            <person name="Noll K."/>
            <person name="Richardson P."/>
        </authorList>
    </citation>
    <scope>NUCLEOTIDE SEQUENCE [LARGE SCALE GENOMIC DNA]</scope>
    <source>
        <strain>ATCC BAA-488 / DSM 13995 / JCM 10881 / RKU-1</strain>
    </source>
</reference>
<dbReference type="EC" id="2.4.99.17" evidence="1"/>
<dbReference type="EMBL" id="CP000702">
    <property type="protein sequence ID" value="ABQ46373.1"/>
    <property type="molecule type" value="Genomic_DNA"/>
</dbReference>
<dbReference type="RefSeq" id="WP_011943008.1">
    <property type="nucleotide sequence ID" value="NC_009486.1"/>
</dbReference>
<dbReference type="STRING" id="390874.Tpet_0344"/>
<dbReference type="KEGG" id="tpt:Tpet_0344"/>
<dbReference type="eggNOG" id="COG0809">
    <property type="taxonomic scope" value="Bacteria"/>
</dbReference>
<dbReference type="HOGENOM" id="CLU_039110_1_0_0"/>
<dbReference type="UniPathway" id="UPA00392"/>
<dbReference type="Proteomes" id="UP000006558">
    <property type="component" value="Chromosome"/>
</dbReference>
<dbReference type="GO" id="GO:0005737">
    <property type="term" value="C:cytoplasm"/>
    <property type="evidence" value="ECO:0007669"/>
    <property type="project" value="UniProtKB-SubCell"/>
</dbReference>
<dbReference type="GO" id="GO:0051075">
    <property type="term" value="F:S-adenosylmethionine:tRNA ribosyltransferase-isomerase activity"/>
    <property type="evidence" value="ECO:0007669"/>
    <property type="project" value="UniProtKB-EC"/>
</dbReference>
<dbReference type="GO" id="GO:0008616">
    <property type="term" value="P:queuosine biosynthetic process"/>
    <property type="evidence" value="ECO:0007669"/>
    <property type="project" value="UniProtKB-UniRule"/>
</dbReference>
<dbReference type="GO" id="GO:0002099">
    <property type="term" value="P:tRNA wobble guanine modification"/>
    <property type="evidence" value="ECO:0007669"/>
    <property type="project" value="TreeGrafter"/>
</dbReference>
<dbReference type="FunFam" id="2.40.10.240:FF:000002">
    <property type="entry name" value="S-adenosylmethionine:tRNA ribosyltransferase-isomerase"/>
    <property type="match status" value="1"/>
</dbReference>
<dbReference type="FunFam" id="3.40.1780.10:FF:000001">
    <property type="entry name" value="S-adenosylmethionine:tRNA ribosyltransferase-isomerase"/>
    <property type="match status" value="1"/>
</dbReference>
<dbReference type="Gene3D" id="2.40.10.240">
    <property type="entry name" value="QueA-like"/>
    <property type="match status" value="1"/>
</dbReference>
<dbReference type="Gene3D" id="3.40.1780.10">
    <property type="entry name" value="QueA-like"/>
    <property type="match status" value="1"/>
</dbReference>
<dbReference type="HAMAP" id="MF_00113">
    <property type="entry name" value="QueA"/>
    <property type="match status" value="1"/>
</dbReference>
<dbReference type="InterPro" id="IPR003699">
    <property type="entry name" value="QueA"/>
</dbReference>
<dbReference type="InterPro" id="IPR042118">
    <property type="entry name" value="QueA_dom1"/>
</dbReference>
<dbReference type="InterPro" id="IPR042119">
    <property type="entry name" value="QueA_dom2"/>
</dbReference>
<dbReference type="InterPro" id="IPR036100">
    <property type="entry name" value="QueA_sf"/>
</dbReference>
<dbReference type="NCBIfam" id="NF001140">
    <property type="entry name" value="PRK00147.1"/>
    <property type="match status" value="1"/>
</dbReference>
<dbReference type="NCBIfam" id="TIGR00113">
    <property type="entry name" value="queA"/>
    <property type="match status" value="1"/>
</dbReference>
<dbReference type="PANTHER" id="PTHR30307">
    <property type="entry name" value="S-ADENOSYLMETHIONINE:TRNA RIBOSYLTRANSFERASE-ISOMERASE"/>
    <property type="match status" value="1"/>
</dbReference>
<dbReference type="PANTHER" id="PTHR30307:SF0">
    <property type="entry name" value="S-ADENOSYLMETHIONINE:TRNA RIBOSYLTRANSFERASE-ISOMERASE"/>
    <property type="match status" value="1"/>
</dbReference>
<dbReference type="Pfam" id="PF02547">
    <property type="entry name" value="Queuosine_synth"/>
    <property type="match status" value="1"/>
</dbReference>
<dbReference type="SUPFAM" id="SSF111337">
    <property type="entry name" value="QueA-like"/>
    <property type="match status" value="1"/>
</dbReference>